<keyword id="KW-0997">Cell inner membrane</keyword>
<keyword id="KW-1003">Cell membrane</keyword>
<keyword id="KW-0328">Glycosyltransferase</keyword>
<keyword id="KW-0472">Membrane</keyword>
<keyword id="KW-0808">Transferase</keyword>
<keyword id="KW-0812">Transmembrane</keyword>
<keyword id="KW-1133">Transmembrane helix</keyword>
<gene>
    <name evidence="1" type="primary">opgH</name>
    <name type="ordered locus">PA14_67065</name>
</gene>
<feature type="chain" id="PRO_1000064608" description="Glucans biosynthesis glucosyltransferase H">
    <location>
        <begin position="1"/>
        <end position="861"/>
    </location>
</feature>
<feature type="transmembrane region" description="Helical" evidence="1">
    <location>
        <begin position="142"/>
        <end position="162"/>
    </location>
</feature>
<feature type="transmembrane region" description="Helical" evidence="1">
    <location>
        <begin position="188"/>
        <end position="208"/>
    </location>
</feature>
<feature type="transmembrane region" description="Helical" evidence="1">
    <location>
        <begin position="516"/>
        <end position="536"/>
    </location>
</feature>
<feature type="transmembrane region" description="Helical" evidence="1">
    <location>
        <begin position="573"/>
        <end position="593"/>
    </location>
</feature>
<feature type="transmembrane region" description="Helical" evidence="1">
    <location>
        <begin position="600"/>
        <end position="620"/>
    </location>
</feature>
<feature type="transmembrane region" description="Helical" evidence="1">
    <location>
        <begin position="683"/>
        <end position="703"/>
    </location>
</feature>
<reference key="1">
    <citation type="journal article" date="2006" name="Genome Biol.">
        <title>Genomic analysis reveals that Pseudomonas aeruginosa virulence is combinatorial.</title>
        <authorList>
            <person name="Lee D.G."/>
            <person name="Urbach J.M."/>
            <person name="Wu G."/>
            <person name="Liberati N.T."/>
            <person name="Feinbaum R.L."/>
            <person name="Miyata S."/>
            <person name="Diggins L.T."/>
            <person name="He J."/>
            <person name="Saucier M."/>
            <person name="Deziel E."/>
            <person name="Friedman L."/>
            <person name="Li L."/>
            <person name="Grills G."/>
            <person name="Montgomery K."/>
            <person name="Kucherlapati R."/>
            <person name="Rahme L.G."/>
            <person name="Ausubel F.M."/>
        </authorList>
    </citation>
    <scope>NUCLEOTIDE SEQUENCE [LARGE SCALE GENOMIC DNA]</scope>
    <source>
        <strain>UCBPP-PA14</strain>
    </source>
</reference>
<dbReference type="EC" id="2.4.1.-" evidence="1"/>
<dbReference type="EMBL" id="CP000438">
    <property type="protein sequence ID" value="ABJ15655.1"/>
    <property type="molecule type" value="Genomic_DNA"/>
</dbReference>
<dbReference type="CAZy" id="GT2">
    <property type="family name" value="Glycosyltransferase Family 2"/>
</dbReference>
<dbReference type="KEGG" id="pau:PA14_67065"/>
<dbReference type="PseudoCAP" id="PA14_67065"/>
<dbReference type="HOGENOM" id="CLU_015730_0_0_6"/>
<dbReference type="BioCyc" id="PAER208963:G1G74-5658-MONOMER"/>
<dbReference type="UniPathway" id="UPA00637"/>
<dbReference type="Proteomes" id="UP000000653">
    <property type="component" value="Chromosome"/>
</dbReference>
<dbReference type="GO" id="GO:0005886">
    <property type="term" value="C:plasma membrane"/>
    <property type="evidence" value="ECO:0007669"/>
    <property type="project" value="UniProtKB-SubCell"/>
</dbReference>
<dbReference type="GO" id="GO:0016758">
    <property type="term" value="F:hexosyltransferase activity"/>
    <property type="evidence" value="ECO:0007669"/>
    <property type="project" value="UniProtKB-UniRule"/>
</dbReference>
<dbReference type="GO" id="GO:0009250">
    <property type="term" value="P:glucan biosynthetic process"/>
    <property type="evidence" value="ECO:0007669"/>
    <property type="project" value="UniProtKB-UniRule"/>
</dbReference>
<dbReference type="CDD" id="cd04191">
    <property type="entry name" value="Glucan_BSP_MdoH"/>
    <property type="match status" value="1"/>
</dbReference>
<dbReference type="FunFam" id="3.90.550.10:FF:000047">
    <property type="entry name" value="Glucans biosynthesis glucosyltransferase H"/>
    <property type="match status" value="1"/>
</dbReference>
<dbReference type="Gene3D" id="3.90.550.10">
    <property type="entry name" value="Spore Coat Polysaccharide Biosynthesis Protein SpsA, Chain A"/>
    <property type="match status" value="1"/>
</dbReference>
<dbReference type="HAMAP" id="MF_01072">
    <property type="entry name" value="MdoH_OpgH"/>
    <property type="match status" value="1"/>
</dbReference>
<dbReference type="InterPro" id="IPR023725">
    <property type="entry name" value="Glucans_biosynth_gluTrFase_H"/>
</dbReference>
<dbReference type="InterPro" id="IPR001173">
    <property type="entry name" value="Glyco_trans_2-like"/>
</dbReference>
<dbReference type="InterPro" id="IPR050321">
    <property type="entry name" value="Glycosyltr_2/OpgH_subfam"/>
</dbReference>
<dbReference type="InterPro" id="IPR029044">
    <property type="entry name" value="Nucleotide-diphossugar_trans"/>
</dbReference>
<dbReference type="NCBIfam" id="NF003955">
    <property type="entry name" value="PRK05454.1-1"/>
    <property type="match status" value="1"/>
</dbReference>
<dbReference type="NCBIfam" id="NF003958">
    <property type="entry name" value="PRK05454.2-1"/>
    <property type="match status" value="1"/>
</dbReference>
<dbReference type="NCBIfam" id="NF003962">
    <property type="entry name" value="PRK05454.2-5"/>
    <property type="match status" value="1"/>
</dbReference>
<dbReference type="PANTHER" id="PTHR43867">
    <property type="entry name" value="CELLULOSE SYNTHASE CATALYTIC SUBUNIT A [UDP-FORMING]"/>
    <property type="match status" value="1"/>
</dbReference>
<dbReference type="PANTHER" id="PTHR43867:SF5">
    <property type="entry name" value="GLUCANS BIOSYNTHESIS GLUCOSYLTRANSFERASE H"/>
    <property type="match status" value="1"/>
</dbReference>
<dbReference type="Pfam" id="PF00535">
    <property type="entry name" value="Glycos_transf_2"/>
    <property type="match status" value="1"/>
</dbReference>
<dbReference type="SUPFAM" id="SSF53448">
    <property type="entry name" value="Nucleotide-diphospho-sugar transferases"/>
    <property type="match status" value="1"/>
</dbReference>
<accession>Q02EU0</accession>
<evidence type="ECO:0000255" key="1">
    <source>
        <dbReference type="HAMAP-Rule" id="MF_01072"/>
    </source>
</evidence>
<proteinExistence type="inferred from homology"/>
<comment type="function">
    <text evidence="1">Involved in the biosynthesis of osmoregulated periplasmic glucans (OPGs).</text>
</comment>
<comment type="pathway">
    <text evidence="1">Glycan metabolism; osmoregulated periplasmic glucan (OPG) biosynthesis.</text>
</comment>
<comment type="subcellular location">
    <subcellularLocation>
        <location evidence="1">Cell inner membrane</location>
        <topology evidence="1">Multi-pass membrane protein</topology>
    </subcellularLocation>
</comment>
<comment type="similarity">
    <text evidence="1">Belongs to the glycosyltransferase 2 family. OpgH subfamily.</text>
</comment>
<sequence length="861" mass="97009">MNNPSTTKAPLADYLAHLPLAEEERERLGESASFSELHARLAGAEGAAADAGGDPALASVRARLQLGTPELDDAEMFGVDAQGRTFLKISPPIRRTKVIPEPWRTNILVRGWRRLTGRSNPPKPKRALPRARWQRVGSLRRFILLLLMLAQTSVATYYMKGILPYQGWAFVDLEELAQQSLLDTVQQVLPYVIQFGILALFAILFCWVSAGFWTALMGFWELLTGRDRYRISGSSAGSEPIAADARTAIVMPICNEDVPRVFAGLRATVESMAATGEMERFDFFVLSDTNDPDIAVAEQQAWLELCRETKGFGKIFYRRRRRRVKRKSGNIDDFCRRWGGDYRYMVVMDADSVMSGDCLAKLVRLMEANPEAGIIQTAPKASGMDTLYARMQQFATRVYGPLFTAGLHFWQLGESHYWGHNAIIRMQPFIDHCALAPLPGKGSFAGAILSHDFVEAALMRRAGWGVWIAYDLDGSYEELPPNLLDELKRDRRWCHGNLMNFRLFLVKGMHPVHRAVFLTGVMSYLSAPLWFFFLVLSTALLAVHQLMEPQYFLEPRQLFPIWPQWHPEKAIALFSTTLTLLFLPKLLSVMLIWAKGAKGFGGVIRVTLSMLLEMFFSVLLAPVRMLFHTRFVLAAFLGWSVQWNSPQRDDDATPWSEAIRRHGMQTLLGIAWTLLVAWLNPRFLWWLSPIVGSLILSIPVSVISSRVKLGLRARDEKLFLIPEEYDTPRELRATDEYTYENRWHALKDGFLKAAVDPLLNALACAMGTARHNRAQAIETVRGERIGKAIEKGPEQLDGATRLALLSDPVALSRLHTRVWEEDRDDWLGRWRKAEADDPHAASVPLAQVVPGDAGLLPAAQS</sequence>
<organism>
    <name type="scientific">Pseudomonas aeruginosa (strain UCBPP-PA14)</name>
    <dbReference type="NCBI Taxonomy" id="208963"/>
    <lineage>
        <taxon>Bacteria</taxon>
        <taxon>Pseudomonadati</taxon>
        <taxon>Pseudomonadota</taxon>
        <taxon>Gammaproteobacteria</taxon>
        <taxon>Pseudomonadales</taxon>
        <taxon>Pseudomonadaceae</taxon>
        <taxon>Pseudomonas</taxon>
    </lineage>
</organism>
<protein>
    <recommendedName>
        <fullName evidence="1">Glucans biosynthesis glucosyltransferase H</fullName>
        <ecNumber evidence="1">2.4.1.-</ecNumber>
    </recommendedName>
</protein>
<name>OPGH_PSEAB</name>